<protein>
    <recommendedName>
        <fullName evidence="1">Endonuclease III</fullName>
        <ecNumber evidence="1">4.2.99.18</ecNumber>
    </recommendedName>
    <alternativeName>
        <fullName evidence="1">DNA-(apurinic or apyrimidinic site) lyase</fullName>
    </alternativeName>
</protein>
<gene>
    <name evidence="1" type="primary">nth</name>
    <name type="ordered locus">BUsg_111</name>
</gene>
<comment type="function">
    <text evidence="1">DNA repair enzyme that has both DNA N-glycosylase activity and AP-lyase activity. The DNA N-glycosylase activity releases various damaged pyrimidines from DNA by cleaving the N-glycosidic bond, leaving an AP (apurinic/apyrimidinic) site. The AP-lyase activity cleaves the phosphodiester bond 3' to the AP site by a beta-elimination, leaving a 3'-terminal unsaturated sugar and a product with a terminal 5'-phosphate.</text>
</comment>
<comment type="catalytic activity">
    <reaction evidence="1">
        <text>2'-deoxyribonucleotide-(2'-deoxyribose 5'-phosphate)-2'-deoxyribonucleotide-DNA = a 3'-end 2'-deoxyribonucleotide-(2,3-dehydro-2,3-deoxyribose 5'-phosphate)-DNA + a 5'-end 5'-phospho-2'-deoxyribonucleoside-DNA + H(+)</text>
        <dbReference type="Rhea" id="RHEA:66592"/>
        <dbReference type="Rhea" id="RHEA-COMP:13180"/>
        <dbReference type="Rhea" id="RHEA-COMP:16897"/>
        <dbReference type="Rhea" id="RHEA-COMP:17067"/>
        <dbReference type="ChEBI" id="CHEBI:15378"/>
        <dbReference type="ChEBI" id="CHEBI:136412"/>
        <dbReference type="ChEBI" id="CHEBI:157695"/>
        <dbReference type="ChEBI" id="CHEBI:167181"/>
        <dbReference type="EC" id="4.2.99.18"/>
    </reaction>
</comment>
<comment type="cofactor">
    <cofactor evidence="1">
        <name>[4Fe-4S] cluster</name>
        <dbReference type="ChEBI" id="CHEBI:49883"/>
    </cofactor>
    <text evidence="1">Binds 1 [4Fe-4S] cluster.</text>
</comment>
<comment type="similarity">
    <text evidence="1">Belongs to the Nth/MutY family.</text>
</comment>
<reference key="1">
    <citation type="journal article" date="2002" name="Science">
        <title>50 million years of genomic stasis in endosymbiotic bacteria.</title>
        <authorList>
            <person name="Tamas I."/>
            <person name="Klasson L."/>
            <person name="Canbaeck B."/>
            <person name="Naeslund A.K."/>
            <person name="Eriksson A.-S."/>
            <person name="Wernegreen J.J."/>
            <person name="Sandstroem J.P."/>
            <person name="Moran N.A."/>
            <person name="Andersson S.G.E."/>
        </authorList>
    </citation>
    <scope>NUCLEOTIDE SEQUENCE [LARGE SCALE GENOMIC DNA]</scope>
    <source>
        <strain>Sg</strain>
    </source>
</reference>
<sequence>MNKKKRFEILSLFYKKNSNPKIELVFSSDFELLLSVILSAKSTDVMVNKITGTLFQIANTPQSILKLGFNKLRHYIKSIGLYNTKSLNIINSAYLIKTKYNNKVPSNRTELESLPGVGRKTANIILNVLFNKNTIAVDTHVFRVANRTGFAKGKNVIEVEKKMIKIVPSIFKKYVHFWFVLHGRYVCTARQLKCKTCFIEKLCEFDKKK</sequence>
<evidence type="ECO:0000255" key="1">
    <source>
        <dbReference type="HAMAP-Rule" id="MF_00942"/>
    </source>
</evidence>
<proteinExistence type="inferred from homology"/>
<dbReference type="EC" id="4.2.99.18" evidence="1"/>
<dbReference type="EMBL" id="AE013218">
    <property type="protein sequence ID" value="AAM67680.1"/>
    <property type="molecule type" value="Genomic_DNA"/>
</dbReference>
<dbReference type="RefSeq" id="WP_011053646.1">
    <property type="nucleotide sequence ID" value="NC_004061.1"/>
</dbReference>
<dbReference type="SMR" id="Q8KA16"/>
<dbReference type="STRING" id="198804.BUsg_111"/>
<dbReference type="GeneID" id="93003581"/>
<dbReference type="KEGG" id="bas:BUsg_111"/>
<dbReference type="eggNOG" id="COG0177">
    <property type="taxonomic scope" value="Bacteria"/>
</dbReference>
<dbReference type="HOGENOM" id="CLU_012862_3_0_6"/>
<dbReference type="Proteomes" id="UP000000416">
    <property type="component" value="Chromosome"/>
</dbReference>
<dbReference type="GO" id="GO:0051539">
    <property type="term" value="F:4 iron, 4 sulfur cluster binding"/>
    <property type="evidence" value="ECO:0007669"/>
    <property type="project" value="UniProtKB-UniRule"/>
</dbReference>
<dbReference type="GO" id="GO:0140078">
    <property type="term" value="F:class I DNA-(apurinic or apyrimidinic site) endonuclease activity"/>
    <property type="evidence" value="ECO:0007669"/>
    <property type="project" value="UniProtKB-EC"/>
</dbReference>
<dbReference type="GO" id="GO:0003677">
    <property type="term" value="F:DNA binding"/>
    <property type="evidence" value="ECO:0007669"/>
    <property type="project" value="UniProtKB-UniRule"/>
</dbReference>
<dbReference type="GO" id="GO:0019104">
    <property type="term" value="F:DNA N-glycosylase activity"/>
    <property type="evidence" value="ECO:0007669"/>
    <property type="project" value="UniProtKB-UniRule"/>
</dbReference>
<dbReference type="GO" id="GO:0046872">
    <property type="term" value="F:metal ion binding"/>
    <property type="evidence" value="ECO:0007669"/>
    <property type="project" value="UniProtKB-KW"/>
</dbReference>
<dbReference type="GO" id="GO:0006285">
    <property type="term" value="P:base-excision repair, AP site formation"/>
    <property type="evidence" value="ECO:0007669"/>
    <property type="project" value="TreeGrafter"/>
</dbReference>
<dbReference type="CDD" id="cd00056">
    <property type="entry name" value="ENDO3c"/>
    <property type="match status" value="1"/>
</dbReference>
<dbReference type="FunFam" id="1.10.1670.10:FF:000001">
    <property type="entry name" value="Endonuclease III"/>
    <property type="match status" value="1"/>
</dbReference>
<dbReference type="FunFam" id="1.10.340.30:FF:000001">
    <property type="entry name" value="Endonuclease III"/>
    <property type="match status" value="1"/>
</dbReference>
<dbReference type="Gene3D" id="1.10.1670.10">
    <property type="entry name" value="Helix-hairpin-Helix base-excision DNA repair enzymes (C-terminal)"/>
    <property type="match status" value="1"/>
</dbReference>
<dbReference type="Gene3D" id="1.10.340.30">
    <property type="entry name" value="Hypothetical protein, domain 2"/>
    <property type="match status" value="1"/>
</dbReference>
<dbReference type="HAMAP" id="MF_00942">
    <property type="entry name" value="Nth"/>
    <property type="match status" value="1"/>
</dbReference>
<dbReference type="InterPro" id="IPR011257">
    <property type="entry name" value="DNA_glycosylase"/>
</dbReference>
<dbReference type="InterPro" id="IPR004036">
    <property type="entry name" value="Endonuclease-III-like_CS2"/>
</dbReference>
<dbReference type="InterPro" id="IPR003265">
    <property type="entry name" value="HhH-GPD_domain"/>
</dbReference>
<dbReference type="InterPro" id="IPR023170">
    <property type="entry name" value="HhH_base_excis_C"/>
</dbReference>
<dbReference type="InterPro" id="IPR000445">
    <property type="entry name" value="HhH_motif"/>
</dbReference>
<dbReference type="InterPro" id="IPR005759">
    <property type="entry name" value="Nth"/>
</dbReference>
<dbReference type="NCBIfam" id="TIGR01083">
    <property type="entry name" value="nth"/>
    <property type="match status" value="1"/>
</dbReference>
<dbReference type="PANTHER" id="PTHR10359">
    <property type="entry name" value="A/G-SPECIFIC ADENINE GLYCOSYLASE/ENDONUCLEASE III"/>
    <property type="match status" value="1"/>
</dbReference>
<dbReference type="PANTHER" id="PTHR10359:SF18">
    <property type="entry name" value="ENDONUCLEASE III"/>
    <property type="match status" value="1"/>
</dbReference>
<dbReference type="Pfam" id="PF00633">
    <property type="entry name" value="HHH"/>
    <property type="match status" value="1"/>
</dbReference>
<dbReference type="Pfam" id="PF00730">
    <property type="entry name" value="HhH-GPD"/>
    <property type="match status" value="1"/>
</dbReference>
<dbReference type="PIRSF" id="PIRSF001435">
    <property type="entry name" value="Nth"/>
    <property type="match status" value="1"/>
</dbReference>
<dbReference type="SMART" id="SM00478">
    <property type="entry name" value="ENDO3c"/>
    <property type="match status" value="1"/>
</dbReference>
<dbReference type="SUPFAM" id="SSF48150">
    <property type="entry name" value="DNA-glycosylase"/>
    <property type="match status" value="1"/>
</dbReference>
<dbReference type="PROSITE" id="PS01155">
    <property type="entry name" value="ENDONUCLEASE_III_2"/>
    <property type="match status" value="1"/>
</dbReference>
<keyword id="KW-0004">4Fe-4S</keyword>
<keyword id="KW-0227">DNA damage</keyword>
<keyword id="KW-0234">DNA repair</keyword>
<keyword id="KW-0238">DNA-binding</keyword>
<keyword id="KW-0326">Glycosidase</keyword>
<keyword id="KW-0378">Hydrolase</keyword>
<keyword id="KW-0408">Iron</keyword>
<keyword id="KW-0411">Iron-sulfur</keyword>
<keyword id="KW-0456">Lyase</keyword>
<keyword id="KW-0479">Metal-binding</keyword>
<name>END3_BUCAP</name>
<feature type="chain" id="PRO_0000102215" description="Endonuclease III">
    <location>
        <begin position="1"/>
        <end position="209"/>
    </location>
</feature>
<feature type="domain" description="HhH" evidence="1">
    <location>
        <begin position="108"/>
        <end position="127"/>
    </location>
</feature>
<feature type="binding site" evidence="1">
    <location>
        <position position="187"/>
    </location>
    <ligand>
        <name>[4Fe-4S] cluster</name>
        <dbReference type="ChEBI" id="CHEBI:49883"/>
    </ligand>
</feature>
<feature type="binding site" evidence="1">
    <location>
        <position position="194"/>
    </location>
    <ligand>
        <name>[4Fe-4S] cluster</name>
        <dbReference type="ChEBI" id="CHEBI:49883"/>
    </ligand>
</feature>
<feature type="binding site" evidence="1">
    <location>
        <position position="197"/>
    </location>
    <ligand>
        <name>[4Fe-4S] cluster</name>
        <dbReference type="ChEBI" id="CHEBI:49883"/>
    </ligand>
</feature>
<feature type="binding site" evidence="1">
    <location>
        <position position="203"/>
    </location>
    <ligand>
        <name>[4Fe-4S] cluster</name>
        <dbReference type="ChEBI" id="CHEBI:49883"/>
    </ligand>
</feature>
<accession>Q8KA16</accession>
<organism>
    <name type="scientific">Buchnera aphidicola subsp. Schizaphis graminum (strain Sg)</name>
    <dbReference type="NCBI Taxonomy" id="198804"/>
    <lineage>
        <taxon>Bacteria</taxon>
        <taxon>Pseudomonadati</taxon>
        <taxon>Pseudomonadota</taxon>
        <taxon>Gammaproteobacteria</taxon>
        <taxon>Enterobacterales</taxon>
        <taxon>Erwiniaceae</taxon>
        <taxon>Buchnera</taxon>
    </lineage>
</organism>